<organism>
    <name type="scientific">Arabidopsis thaliana</name>
    <name type="common">Mouse-ear cress</name>
    <dbReference type="NCBI Taxonomy" id="3702"/>
    <lineage>
        <taxon>Eukaryota</taxon>
        <taxon>Viridiplantae</taxon>
        <taxon>Streptophyta</taxon>
        <taxon>Embryophyta</taxon>
        <taxon>Tracheophyta</taxon>
        <taxon>Spermatophyta</taxon>
        <taxon>Magnoliopsida</taxon>
        <taxon>eudicotyledons</taxon>
        <taxon>Gunneridae</taxon>
        <taxon>Pentapetalae</taxon>
        <taxon>rosids</taxon>
        <taxon>malvids</taxon>
        <taxon>Brassicales</taxon>
        <taxon>Brassicaceae</taxon>
        <taxon>Camelineae</taxon>
        <taxon>Arabidopsis</taxon>
    </lineage>
</organism>
<sequence>MRYDQEAGSSSHSLPSGSSSHSLPPTEDTPLLGPRTLSSQPKTFANVFIAIVGAGVLGLPYTFKKTGWLLGLLTLLFVSSLTFFCMMLLVHTRRKLESLSGFNSITSFGDLGESVCGPAGRLVVDVMLVLSQSGFCVSYLIFVATTMANLLSRGTEHILGLDAASIYLWGCFPFQLGLNSIPSLTHLAPLSIFADIVDVAATLVVMVQDVFIFLKRRPPLRVFGGVSVFFYGLGVAVYAFEGIGMVLPLELEAKYKDKFGRALGLAMGLISIMYGAFGLLGYMAYGEETKDIITTNLGTGVVSTLVQLGLAINLFFTFPLMMQPVYEVVERRLCSSRYSVWVRWATVLVVTLVALLVPNFADFLSLVGSSVCVVLGFVLPSLFHLQAFKNELSITRIVVDVLVFLIGVMIAITGTWTAVHEILTSKA</sequence>
<keyword id="KW-0029">Amino-acid transport</keyword>
<keyword id="KW-0472">Membrane</keyword>
<keyword id="KW-1185">Reference proteome</keyword>
<keyword id="KW-0812">Transmembrane</keyword>
<keyword id="KW-1133">Transmembrane helix</keyword>
<keyword id="KW-0813">Transport</keyword>
<keyword id="KW-0926">Vacuole</keyword>
<name>AVT3A_ARATH</name>
<evidence type="ECO:0000255" key="1"/>
<evidence type="ECO:0000256" key="2">
    <source>
        <dbReference type="SAM" id="MobiDB-lite"/>
    </source>
</evidence>
<evidence type="ECO:0000269" key="3">
    <source>
    </source>
</evidence>
<evidence type="ECO:0000303" key="4">
    <source>
    </source>
</evidence>
<evidence type="ECO:0000305" key="5"/>
<evidence type="ECO:0000312" key="6">
    <source>
        <dbReference type="Araport" id="AT5G65990"/>
    </source>
</evidence>
<evidence type="ECO:0000312" key="7">
    <source>
        <dbReference type="EMBL" id="BAB10404.1"/>
    </source>
</evidence>
<dbReference type="EMBL" id="AB011474">
    <property type="protein sequence ID" value="BAB10404.1"/>
    <property type="molecule type" value="Genomic_DNA"/>
</dbReference>
<dbReference type="EMBL" id="CP002688">
    <property type="protein sequence ID" value="AED98135.1"/>
    <property type="molecule type" value="Genomic_DNA"/>
</dbReference>
<dbReference type="EMBL" id="BT026486">
    <property type="protein sequence ID" value="ABH04593.1"/>
    <property type="molecule type" value="mRNA"/>
</dbReference>
<dbReference type="EMBL" id="BT011236">
    <property type="protein sequence ID" value="AAR92272.1"/>
    <property type="status" value="ALT_INIT"/>
    <property type="molecule type" value="mRNA"/>
</dbReference>
<dbReference type="RefSeq" id="NP_201400.1">
    <property type="nucleotide sequence ID" value="NM_125996.5"/>
</dbReference>
<dbReference type="SMR" id="Q9FKY3"/>
<dbReference type="FunCoup" id="Q9FKY3">
    <property type="interactions" value="965"/>
</dbReference>
<dbReference type="IntAct" id="Q9FKY3">
    <property type="interactions" value="2"/>
</dbReference>
<dbReference type="STRING" id="3702.Q9FKY3"/>
<dbReference type="PaxDb" id="3702-AT5G65990.1"/>
<dbReference type="ProteomicsDB" id="241018"/>
<dbReference type="EnsemblPlants" id="AT5G65990.1">
    <property type="protein sequence ID" value="AT5G65990.1"/>
    <property type="gene ID" value="AT5G65990"/>
</dbReference>
<dbReference type="GeneID" id="836729"/>
<dbReference type="Gramene" id="AT5G65990.1">
    <property type="protein sequence ID" value="AT5G65990.1"/>
    <property type="gene ID" value="AT5G65990"/>
</dbReference>
<dbReference type="KEGG" id="ath:AT5G65990"/>
<dbReference type="Araport" id="AT5G65990"/>
<dbReference type="TAIR" id="AT5G65990">
    <property type="gene designation" value="ATAVT3"/>
</dbReference>
<dbReference type="eggNOG" id="KOG1304">
    <property type="taxonomic scope" value="Eukaryota"/>
</dbReference>
<dbReference type="HOGENOM" id="CLU_009646_6_0_1"/>
<dbReference type="InParanoid" id="Q9FKY3"/>
<dbReference type="OMA" id="MYSGLVM"/>
<dbReference type="OrthoDB" id="40134at2759"/>
<dbReference type="PhylomeDB" id="Q9FKY3"/>
<dbReference type="PRO" id="PR:Q9FKY3"/>
<dbReference type="Proteomes" id="UP000006548">
    <property type="component" value="Chromosome 5"/>
</dbReference>
<dbReference type="ExpressionAtlas" id="Q9FKY3">
    <property type="expression patterns" value="baseline and differential"/>
</dbReference>
<dbReference type="GO" id="GO:0005774">
    <property type="term" value="C:vacuolar membrane"/>
    <property type="evidence" value="ECO:0000314"/>
    <property type="project" value="UniProtKB"/>
</dbReference>
<dbReference type="GO" id="GO:0015173">
    <property type="term" value="F:aromatic amino acid transmembrane transporter activity"/>
    <property type="evidence" value="ECO:0000314"/>
    <property type="project" value="UniProtKB"/>
</dbReference>
<dbReference type="GO" id="GO:0015175">
    <property type="term" value="F:neutral L-amino acid transmembrane transporter activity"/>
    <property type="evidence" value="ECO:0000314"/>
    <property type="project" value="UniProtKB"/>
</dbReference>
<dbReference type="GO" id="GO:0015801">
    <property type="term" value="P:aromatic amino acid transport"/>
    <property type="evidence" value="ECO:0000314"/>
    <property type="project" value="UniProtKB"/>
</dbReference>
<dbReference type="GO" id="GO:0015804">
    <property type="term" value="P:neutral amino acid transport"/>
    <property type="evidence" value="ECO:0000314"/>
    <property type="project" value="UniProtKB"/>
</dbReference>
<dbReference type="InterPro" id="IPR013057">
    <property type="entry name" value="AA_transpt_TM"/>
</dbReference>
<dbReference type="PANTHER" id="PTHR22950">
    <property type="entry name" value="AMINO ACID TRANSPORTER"/>
    <property type="match status" value="1"/>
</dbReference>
<dbReference type="PANTHER" id="PTHR22950:SF674">
    <property type="entry name" value="AMINO ACID TRANSPORTER AVT3A"/>
    <property type="match status" value="1"/>
</dbReference>
<dbReference type="Pfam" id="PF01490">
    <property type="entry name" value="Aa_trans"/>
    <property type="match status" value="1"/>
</dbReference>
<accession>Q9FKY3</accession>
<accession>Q6NNP8</accession>
<comment type="function">
    <text evidence="3">Translocates preferentially neutral amino acids and to a lesser extent aromatic amino acids from the vacuole to the cytoplasm. Requires ATP for function.</text>
</comment>
<comment type="subcellular location">
    <subcellularLocation>
        <location evidence="3">Vacuole membrane</location>
        <topology evidence="1">Multi-pass membrane protein</topology>
    </subcellularLocation>
</comment>
<comment type="tissue specificity">
    <text evidence="3">Ubiquitous.</text>
</comment>
<comment type="similarity">
    <text evidence="5">Belongs to the amino acid/polyamine transporter 2 family. Amino acid/auxin permease (AAAP) (TC 2.A.18.8) subfamily.</text>
</comment>
<comment type="sequence caution" evidence="5">
    <conflict type="erroneous initiation">
        <sequence resource="EMBL-CDS" id="AAR92272"/>
    </conflict>
    <text>Truncated N-terminus.</text>
</comment>
<gene>
    <name evidence="4" type="primary">AVT3A</name>
    <name evidence="6" type="ordered locus">At5g65990</name>
    <name evidence="7" type="ORF">K2A18.5</name>
</gene>
<reference key="1">
    <citation type="journal article" date="1998" name="DNA Res.">
        <title>Structural analysis of Arabidopsis thaliana chromosome 5. V. Sequence features of the regions of 1,381,565 bp covered by twenty one physically assigned P1 and TAC clones.</title>
        <authorList>
            <person name="Kaneko T."/>
            <person name="Kotani H."/>
            <person name="Nakamura Y."/>
            <person name="Sato S."/>
            <person name="Asamizu E."/>
            <person name="Miyajima N."/>
            <person name="Tabata S."/>
        </authorList>
    </citation>
    <scope>NUCLEOTIDE SEQUENCE [LARGE SCALE GENOMIC DNA]</scope>
    <source>
        <strain>cv. Columbia</strain>
    </source>
</reference>
<reference key="2">
    <citation type="journal article" date="2017" name="Plant J.">
        <title>Araport11: a complete reannotation of the Arabidopsis thaliana reference genome.</title>
        <authorList>
            <person name="Cheng C.Y."/>
            <person name="Krishnakumar V."/>
            <person name="Chan A.P."/>
            <person name="Thibaud-Nissen F."/>
            <person name="Schobel S."/>
            <person name="Town C.D."/>
        </authorList>
    </citation>
    <scope>GENOME REANNOTATION</scope>
    <source>
        <strain>cv. Columbia</strain>
    </source>
</reference>
<reference key="3">
    <citation type="submission" date="2006-08" db="EMBL/GenBank/DDBJ databases">
        <title>Arabidopsis ORF Clones.</title>
        <authorList>
            <person name="Quinitio C."/>
            <person name="Chen H."/>
            <person name="Kim C.J."/>
            <person name="Shinn P."/>
            <person name="Ecker J.R."/>
        </authorList>
    </citation>
    <scope>NUCLEOTIDE SEQUENCE [LARGE SCALE MRNA]</scope>
    <source>
        <strain>cv. Columbia</strain>
    </source>
</reference>
<reference key="4">
    <citation type="submission" date="2004-01" db="EMBL/GenBank/DDBJ databases">
        <title>Arabidopsis ORF clones.</title>
        <authorList>
            <person name="Cheuk R.F."/>
            <person name="Chen H."/>
            <person name="Kim C.J."/>
            <person name="Shinn P."/>
            <person name="Ecker J.R."/>
        </authorList>
    </citation>
    <scope>NUCLEOTIDE SEQUENCE [LARGE SCALE MRNA] OF 2-427</scope>
    <source>
        <strain>cv. Columbia</strain>
    </source>
</reference>
<reference key="5">
    <citation type="journal article" date="2017" name="FEBS Lett.">
        <title>Functional identification of AtAVT3, a family of vacuolar amino acid transporters, in Arabidopsis.</title>
        <authorList>
            <person name="Fujiki Y."/>
            <person name="Teshima H."/>
            <person name="Kashiwao S."/>
            <person name="Kawano-Kawada M."/>
            <person name="Ohsumi Y."/>
            <person name="Kakinuma Y."/>
            <person name="Sekito T."/>
        </authorList>
    </citation>
    <scope>GENE FAMILY</scope>
    <scope>NOMENCLATURE</scope>
    <scope>SUBCELLULAR LOCATION</scope>
    <scope>FUNCTION</scope>
    <scope>MUTAGENESIS OF GLU-241</scope>
    <scope>TISSUE SPECIFICITY</scope>
</reference>
<proteinExistence type="evidence at protein level"/>
<protein>
    <recommendedName>
        <fullName evidence="5">Amino acid transporter AVT3A</fullName>
        <shortName evidence="4">AtAvt3A</shortName>
    </recommendedName>
    <alternativeName>
        <fullName evidence="5">Aromatic and neutral amino acid transporter-like protein 3</fullName>
    </alternativeName>
</protein>
<feature type="chain" id="PRO_0000433108" description="Amino acid transporter AVT3A">
    <location>
        <begin position="1"/>
        <end position="427"/>
    </location>
</feature>
<feature type="topological domain" description="Cytoplasmic" evidence="5">
    <location>
        <begin position="1"/>
        <end position="42"/>
    </location>
</feature>
<feature type="transmembrane region" description="Helical; Name=1" evidence="1">
    <location>
        <begin position="43"/>
        <end position="63"/>
    </location>
</feature>
<feature type="topological domain" description="Vacuolar" evidence="5">
    <location>
        <begin position="64"/>
        <end position="69"/>
    </location>
</feature>
<feature type="transmembrane region" description="Helical; Name=2" evidence="1">
    <location>
        <begin position="70"/>
        <end position="90"/>
    </location>
</feature>
<feature type="topological domain" description="Cytoplasmic" evidence="5">
    <location>
        <begin position="91"/>
        <end position="122"/>
    </location>
</feature>
<feature type="transmembrane region" description="Helical; Name=3" evidence="1">
    <location>
        <begin position="123"/>
        <end position="143"/>
    </location>
</feature>
<feature type="topological domain" description="Vacuolar" evidence="5">
    <location>
        <begin position="144"/>
        <end position="157"/>
    </location>
</feature>
<feature type="transmembrane region" description="Helical; Name=4" evidence="1">
    <location>
        <begin position="158"/>
        <end position="178"/>
    </location>
</feature>
<feature type="topological domain" description="Cytoplasmic" evidence="5">
    <location>
        <begin position="179"/>
        <end position="186"/>
    </location>
</feature>
<feature type="transmembrane region" description="Helical; Name=5" evidence="1">
    <location>
        <begin position="187"/>
        <end position="207"/>
    </location>
</feature>
<feature type="topological domain" description="Vacuolar" evidence="5">
    <location>
        <begin position="208"/>
        <end position="227"/>
    </location>
</feature>
<feature type="transmembrane region" description="Helical; Name=6" evidence="1">
    <location>
        <begin position="228"/>
        <end position="248"/>
    </location>
</feature>
<feature type="topological domain" description="Cytoplasmic" evidence="5">
    <location>
        <begin position="249"/>
        <end position="262"/>
    </location>
</feature>
<feature type="transmembrane region" description="Helical; Name=7" evidence="1">
    <location>
        <begin position="263"/>
        <end position="283"/>
    </location>
</feature>
<feature type="topological domain" description="Vacuolar" evidence="5">
    <location>
        <begin position="284"/>
        <end position="300"/>
    </location>
</feature>
<feature type="transmembrane region" description="Helical; Name=8" evidence="1">
    <location>
        <begin position="301"/>
        <end position="321"/>
    </location>
</feature>
<feature type="topological domain" description="Cytoplasmic" evidence="5">
    <location>
        <begin position="322"/>
        <end position="339"/>
    </location>
</feature>
<feature type="transmembrane region" description="Helical; Name=9" evidence="1">
    <location>
        <begin position="340"/>
        <end position="360"/>
    </location>
</feature>
<feature type="topological domain" description="Vacuolar" evidence="5">
    <location>
        <begin position="361"/>
        <end position="362"/>
    </location>
</feature>
<feature type="transmembrane region" description="Helical; Name=10" evidence="1">
    <location>
        <begin position="363"/>
        <end position="383"/>
    </location>
</feature>
<feature type="topological domain" description="Cytoplasmic" evidence="5">
    <location>
        <begin position="384"/>
        <end position="396"/>
    </location>
</feature>
<feature type="transmembrane region" description="Helical; Name=11" evidence="1">
    <location>
        <begin position="397"/>
        <end position="417"/>
    </location>
</feature>
<feature type="topological domain" description="Vacuolar" evidence="5">
    <location>
        <begin position="418"/>
        <end position="427"/>
    </location>
</feature>
<feature type="region of interest" description="Disordered" evidence="2">
    <location>
        <begin position="1"/>
        <end position="35"/>
    </location>
</feature>
<feature type="compositionally biased region" description="Low complexity" evidence="2">
    <location>
        <begin position="8"/>
        <end position="24"/>
    </location>
</feature>
<feature type="mutagenesis site" description="Abolishes transport activity." evidence="3">
    <original>E</original>
    <variation>A</variation>
    <location>
        <position position="241"/>
    </location>
</feature>